<comment type="subcellular location">
    <subcellularLocation>
        <location evidence="1">Cell membrane</location>
        <topology evidence="1">Multi-pass membrane protein</topology>
    </subcellularLocation>
</comment>
<comment type="similarity">
    <text evidence="1">Belongs to the UPF0182 family.</text>
</comment>
<gene>
    <name type="ordered locus">Noca_1530</name>
</gene>
<reference key="1">
    <citation type="submission" date="2006-12" db="EMBL/GenBank/DDBJ databases">
        <title>Complete sequence of chromosome 1 of Nocardioides sp. JS614.</title>
        <authorList>
            <person name="Copeland A."/>
            <person name="Lucas S."/>
            <person name="Lapidus A."/>
            <person name="Barry K."/>
            <person name="Detter J.C."/>
            <person name="Glavina del Rio T."/>
            <person name="Hammon N."/>
            <person name="Israni S."/>
            <person name="Dalin E."/>
            <person name="Tice H."/>
            <person name="Pitluck S."/>
            <person name="Thompson L.S."/>
            <person name="Brettin T."/>
            <person name="Bruce D."/>
            <person name="Han C."/>
            <person name="Tapia R."/>
            <person name="Schmutz J."/>
            <person name="Larimer F."/>
            <person name="Land M."/>
            <person name="Hauser L."/>
            <person name="Kyrpides N."/>
            <person name="Kim E."/>
            <person name="Mattes T."/>
            <person name="Gossett J."/>
            <person name="Richardson P."/>
        </authorList>
    </citation>
    <scope>NUCLEOTIDE SEQUENCE [LARGE SCALE GENOMIC DNA]</scope>
    <source>
        <strain>ATCC BAA-499 / JS614</strain>
    </source>
</reference>
<keyword id="KW-1003">Cell membrane</keyword>
<keyword id="KW-0472">Membrane</keyword>
<keyword id="KW-1185">Reference proteome</keyword>
<keyword id="KW-0812">Transmembrane</keyword>
<keyword id="KW-1133">Transmembrane helix</keyword>
<protein>
    <recommendedName>
        <fullName evidence="1">UPF0182 protein Noca_1530</fullName>
    </recommendedName>
</protein>
<name>Y1530_NOCSJ</name>
<accession>A1SGV9</accession>
<organism>
    <name type="scientific">Nocardioides sp. (strain ATCC BAA-499 / JS614)</name>
    <dbReference type="NCBI Taxonomy" id="196162"/>
    <lineage>
        <taxon>Bacteria</taxon>
        <taxon>Bacillati</taxon>
        <taxon>Actinomycetota</taxon>
        <taxon>Actinomycetes</taxon>
        <taxon>Propionibacteriales</taxon>
        <taxon>Nocardioidaceae</taxon>
        <taxon>Nocardioides</taxon>
    </lineage>
</organism>
<evidence type="ECO:0000255" key="1">
    <source>
        <dbReference type="HAMAP-Rule" id="MF_01600"/>
    </source>
</evidence>
<evidence type="ECO:0000256" key="2">
    <source>
        <dbReference type="SAM" id="MobiDB-lite"/>
    </source>
</evidence>
<dbReference type="EMBL" id="CP000509">
    <property type="protein sequence ID" value="ABL81044.1"/>
    <property type="molecule type" value="Genomic_DNA"/>
</dbReference>
<dbReference type="RefSeq" id="WP_011754992.1">
    <property type="nucleotide sequence ID" value="NC_008699.1"/>
</dbReference>
<dbReference type="SMR" id="A1SGV9"/>
<dbReference type="STRING" id="196162.Noca_1530"/>
<dbReference type="KEGG" id="nca:Noca_1530"/>
<dbReference type="eggNOG" id="COG1615">
    <property type="taxonomic scope" value="Bacteria"/>
</dbReference>
<dbReference type="HOGENOM" id="CLU_007733_1_0_11"/>
<dbReference type="OrthoDB" id="9763654at2"/>
<dbReference type="Proteomes" id="UP000000640">
    <property type="component" value="Chromosome"/>
</dbReference>
<dbReference type="GO" id="GO:0005576">
    <property type="term" value="C:extracellular region"/>
    <property type="evidence" value="ECO:0007669"/>
    <property type="project" value="TreeGrafter"/>
</dbReference>
<dbReference type="GO" id="GO:0005886">
    <property type="term" value="C:plasma membrane"/>
    <property type="evidence" value="ECO:0007669"/>
    <property type="project" value="UniProtKB-SubCell"/>
</dbReference>
<dbReference type="HAMAP" id="MF_01600">
    <property type="entry name" value="UPF0182"/>
    <property type="match status" value="1"/>
</dbReference>
<dbReference type="InterPro" id="IPR011051">
    <property type="entry name" value="RmlC_Cupin_sf"/>
</dbReference>
<dbReference type="InterPro" id="IPR005372">
    <property type="entry name" value="UPF0182"/>
</dbReference>
<dbReference type="PANTHER" id="PTHR39344">
    <property type="entry name" value="UPF0182 PROTEIN SLL1060"/>
    <property type="match status" value="1"/>
</dbReference>
<dbReference type="PANTHER" id="PTHR39344:SF1">
    <property type="entry name" value="UPF0182 PROTEIN SLL1060"/>
    <property type="match status" value="1"/>
</dbReference>
<dbReference type="Pfam" id="PF03699">
    <property type="entry name" value="UPF0182"/>
    <property type="match status" value="1"/>
</dbReference>
<dbReference type="SUPFAM" id="SSF51182">
    <property type="entry name" value="RmlC-like cupins"/>
    <property type="match status" value="1"/>
</dbReference>
<proteinExistence type="inferred from homology"/>
<sequence>MSELFDEAPRDPGPPARSGSRRSRALIVTAVVLVIGFLGLSTFAGIYTDRLWYVSGGYGAVFTTLFWTKTVLFFLFGAGMALVVGVNIYLAYRFRPFFRPNSPEQNGLDRYREAINPIRTWLLVGVALVLGAFAGSSAIGEWRDYLLWRNGTSFGSEDAYFQKDIGFYVFDLPWLHYLVDYAMAVLVVALIAAAVVHYLYGGIRLQTPRDRLSGAAQAQISVLLGFFVLAKAADYWLDRFDLVSQGGGVITGMTYTDDHAVLPAKNILLGISIICAVLFFVNVWRRTWLLPSVGLALLAVSAILLGLIWPGIVQQFQVKPSEADKEAPYIEKNIEATRTAYDVANVDVEKYDPATALGAGSASMVEEETSSVPLVDPQLVRDAFEQNQQVRAYYSVAQVLDVDRYDIDGNDRALVLGVRELDQSGMNAGDRNWTNLHTVYTHGNGIIAAFANQRSEDNKTQIDNADNTGDQAGIVWAQGTNAGQDALARATGGFEDRIYYGEQSPQYSVVGKATPDSTDVELNLQTAGSDEGSTTTYDGNGDASVGGFFNQLMFATKFGEPNFLLSGRVNPNSKVLFNRNPADRVEKVAPWLTVDSDPYPAVVDGRILWIIDGYTTTDRYPLSEKESFQTMIDDSLQEETGLRTLPTDEINYMRNAVKATVDAYTGDVTLYAWDEEDPILQAWRSAFPGTVEDKSEISDDLLDHLRYPEDLFQVQRYQFARYHVTEPIDFYQGNNRWQVPEDPYSKGKFQPPYRLFVDSNGGTDQVFALTSVYVPYNKNNLASFVSVNADATSDQYGQMQVLELPNEQTPGPGQVANQFATDPEVANELAQFNRSGARPVYGNLLTLPINDGLMYVQPVYATQALSDSSFPILRYVLVKYGNDIGFGSTLRDALENLLGVSTGPGTQPPDTGQPGDNENPPPATGTVAAQIRALLAQAQDAFDAADAALADGNLAEYQRQIGIAQANVEAAMELGQKRGSAGQPSGSPSGSASSSPSESPSPSS</sequence>
<feature type="chain" id="PRO_0000291286" description="UPF0182 protein Noca_1530">
    <location>
        <begin position="1"/>
        <end position="1004"/>
    </location>
</feature>
<feature type="transmembrane region" description="Helical" evidence="1">
    <location>
        <begin position="26"/>
        <end position="46"/>
    </location>
</feature>
<feature type="transmembrane region" description="Helical" evidence="1">
    <location>
        <begin position="71"/>
        <end position="91"/>
    </location>
</feature>
<feature type="transmembrane region" description="Helical" evidence="1">
    <location>
        <begin position="120"/>
        <end position="140"/>
    </location>
</feature>
<feature type="transmembrane region" description="Helical" evidence="1">
    <location>
        <begin position="183"/>
        <end position="203"/>
    </location>
</feature>
<feature type="transmembrane region" description="Helical" evidence="1">
    <location>
        <begin position="212"/>
        <end position="232"/>
    </location>
</feature>
<feature type="transmembrane region" description="Helical" evidence="1">
    <location>
        <begin position="261"/>
        <end position="281"/>
    </location>
</feature>
<feature type="transmembrane region" description="Helical" evidence="1">
    <location>
        <begin position="293"/>
        <end position="313"/>
    </location>
</feature>
<feature type="region of interest" description="Disordered" evidence="2">
    <location>
        <begin position="1"/>
        <end position="20"/>
    </location>
</feature>
<feature type="region of interest" description="Disordered" evidence="2">
    <location>
        <begin position="899"/>
        <end position="924"/>
    </location>
</feature>
<feature type="region of interest" description="Disordered" evidence="2">
    <location>
        <begin position="974"/>
        <end position="1004"/>
    </location>
</feature>
<feature type="compositionally biased region" description="Low complexity" evidence="2">
    <location>
        <begin position="903"/>
        <end position="916"/>
    </location>
</feature>
<feature type="compositionally biased region" description="Low complexity" evidence="2">
    <location>
        <begin position="979"/>
        <end position="1004"/>
    </location>
</feature>